<keyword id="KW-0028">Amino-acid biosynthesis</keyword>
<keyword id="KW-0057">Aromatic amino acid biosynthesis</keyword>
<keyword id="KW-0289">Folate biosynthesis</keyword>
<keyword id="KW-0315">Glutamine amidotransferase</keyword>
<keyword id="KW-0456">Lyase</keyword>
<keyword id="KW-1185">Reference proteome</keyword>
<keyword id="KW-0808">Transferase</keyword>
<keyword id="KW-0822">Tryptophan biosynthesis</keyword>
<gene>
    <name evidence="5" type="primary">pabA</name>
    <name evidence="4" type="synonym">trpG</name>
    <name type="ordered locus">BSU00750</name>
</gene>
<dbReference type="EC" id="2.6.1.85" evidence="6"/>
<dbReference type="EC" id="4.1.3.27"/>
<dbReference type="EMBL" id="M34053">
    <property type="protein sequence ID" value="AAA22695.1"/>
    <property type="molecule type" value="Genomic_DNA"/>
</dbReference>
<dbReference type="EMBL" id="D26185">
    <property type="protein sequence ID" value="BAA05310.1"/>
    <property type="molecule type" value="Genomic_DNA"/>
</dbReference>
<dbReference type="EMBL" id="AL009126">
    <property type="protein sequence ID" value="CAB11851.1"/>
    <property type="molecule type" value="Genomic_DNA"/>
</dbReference>
<dbReference type="PIR" id="B37854">
    <property type="entry name" value="B37854"/>
</dbReference>
<dbReference type="RefSeq" id="NP_387956.1">
    <property type="nucleotide sequence ID" value="NC_000964.3"/>
</dbReference>
<dbReference type="RefSeq" id="WP_003243797.1">
    <property type="nucleotide sequence ID" value="NZ_OZ025638.1"/>
</dbReference>
<dbReference type="SMR" id="P28819"/>
<dbReference type="FunCoup" id="P28819">
    <property type="interactions" value="420"/>
</dbReference>
<dbReference type="STRING" id="224308.BSU00750"/>
<dbReference type="MEROPS" id="C26.955"/>
<dbReference type="PaxDb" id="224308-BSU00750"/>
<dbReference type="EnsemblBacteria" id="CAB11851">
    <property type="protein sequence ID" value="CAB11851"/>
    <property type="gene ID" value="BSU_00750"/>
</dbReference>
<dbReference type="GeneID" id="936441"/>
<dbReference type="KEGG" id="bsu:BSU00750"/>
<dbReference type="PATRIC" id="fig|224308.179.peg.75"/>
<dbReference type="eggNOG" id="COG0512">
    <property type="taxonomic scope" value="Bacteria"/>
</dbReference>
<dbReference type="InParanoid" id="P28819"/>
<dbReference type="OrthoDB" id="9804328at2"/>
<dbReference type="PhylomeDB" id="P28819"/>
<dbReference type="BioCyc" id="BSUB:BSU00750-MONOMER"/>
<dbReference type="BioCyc" id="MetaCyc:BSU00750-MONOMER"/>
<dbReference type="SABIO-RK" id="P28819"/>
<dbReference type="UniPathway" id="UPA00035">
    <property type="reaction ID" value="UER00040"/>
</dbReference>
<dbReference type="UniPathway" id="UPA00077">
    <property type="reaction ID" value="UER00149"/>
</dbReference>
<dbReference type="Proteomes" id="UP000001570">
    <property type="component" value="Chromosome"/>
</dbReference>
<dbReference type="GO" id="GO:0046820">
    <property type="term" value="F:4-amino-4-deoxychorismate synthase activity"/>
    <property type="evidence" value="ECO:0000315"/>
    <property type="project" value="UniProtKB"/>
</dbReference>
<dbReference type="GO" id="GO:0004049">
    <property type="term" value="F:anthranilate synthase activity"/>
    <property type="evidence" value="ECO:0000315"/>
    <property type="project" value="UniProtKB"/>
</dbReference>
<dbReference type="GO" id="GO:0046656">
    <property type="term" value="P:folic acid biosynthetic process"/>
    <property type="evidence" value="ECO:0007669"/>
    <property type="project" value="UniProtKB-KW"/>
</dbReference>
<dbReference type="GO" id="GO:0000162">
    <property type="term" value="P:L-tryptophan biosynthetic process"/>
    <property type="evidence" value="ECO:0000315"/>
    <property type="project" value="UniProtKB"/>
</dbReference>
<dbReference type="GO" id="GO:0046654">
    <property type="term" value="P:tetrahydrofolate biosynthetic process"/>
    <property type="evidence" value="ECO:0000315"/>
    <property type="project" value="UniProtKB"/>
</dbReference>
<dbReference type="CDD" id="cd01743">
    <property type="entry name" value="GATase1_Anthranilate_Synthase"/>
    <property type="match status" value="1"/>
</dbReference>
<dbReference type="FunFam" id="3.40.50.880:FF:000003">
    <property type="entry name" value="Anthranilate synthase component II"/>
    <property type="match status" value="1"/>
</dbReference>
<dbReference type="Gene3D" id="3.40.50.880">
    <property type="match status" value="1"/>
</dbReference>
<dbReference type="InterPro" id="IPR050472">
    <property type="entry name" value="Anth_synth/Amidotransfase"/>
</dbReference>
<dbReference type="InterPro" id="IPR029062">
    <property type="entry name" value="Class_I_gatase-like"/>
</dbReference>
<dbReference type="InterPro" id="IPR017926">
    <property type="entry name" value="GATASE"/>
</dbReference>
<dbReference type="InterPro" id="IPR006221">
    <property type="entry name" value="TrpG/PapA_dom"/>
</dbReference>
<dbReference type="NCBIfam" id="NF005799">
    <property type="entry name" value="PRK07649.1"/>
    <property type="match status" value="1"/>
</dbReference>
<dbReference type="NCBIfam" id="TIGR00566">
    <property type="entry name" value="trpG_papA"/>
    <property type="match status" value="1"/>
</dbReference>
<dbReference type="PANTHER" id="PTHR43418:SF4">
    <property type="entry name" value="MULTIFUNCTIONAL TRYPTOPHAN BIOSYNTHESIS PROTEIN"/>
    <property type="match status" value="1"/>
</dbReference>
<dbReference type="PANTHER" id="PTHR43418">
    <property type="entry name" value="MULTIFUNCTIONAL TRYPTOPHAN BIOSYNTHESIS PROTEIN-RELATED"/>
    <property type="match status" value="1"/>
</dbReference>
<dbReference type="Pfam" id="PF00117">
    <property type="entry name" value="GATase"/>
    <property type="match status" value="1"/>
</dbReference>
<dbReference type="PRINTS" id="PR00097">
    <property type="entry name" value="ANTSNTHASEII"/>
</dbReference>
<dbReference type="PRINTS" id="PR00099">
    <property type="entry name" value="CPSGATASE"/>
</dbReference>
<dbReference type="PRINTS" id="PR00096">
    <property type="entry name" value="GATASE"/>
</dbReference>
<dbReference type="SUPFAM" id="SSF52317">
    <property type="entry name" value="Class I glutamine amidotransferase-like"/>
    <property type="match status" value="1"/>
</dbReference>
<dbReference type="PROSITE" id="PS51273">
    <property type="entry name" value="GATASE_TYPE_1"/>
    <property type="match status" value="1"/>
</dbReference>
<protein>
    <recommendedName>
        <fullName>Aminodeoxychorismate/anthranilate synthase component 2</fullName>
        <shortName>ADC synthase</shortName>
        <shortName>ADCS</shortName>
        <ecNumber evidence="6">2.6.1.85</ecNumber>
        <ecNumber>4.1.3.27</ecNumber>
    </recommendedName>
    <alternativeName>
        <fullName>4-amino-4-deoxychorismate synthase component 2</fullName>
    </alternativeName>
    <alternativeName>
        <fullName>Aminodeoxychorismate synthase, glutamine amidotransferase component</fullName>
    </alternativeName>
</protein>
<comment type="function">
    <text evidence="1 3">Part of a heterodimeric complex that catalyzes the two-step biosynthesis of 4-amino-4-deoxychorismate (ADC), a precursor of p-aminobenzoate (PABA) and tetrahydrofolate. In the first step, a glutamine amidotransferase (PabA) generates ammonia as a substrate that, along with chorismate, is used in the second step, catalyzed by aminodeoxychorismate synthase (PabB) to produce ADC. PabA converts glutamine into glutamate only in the presence of stoichiometric amounts of PabB. Also involved in the biosynthesis of anthranilate (By similarity). Complements a glutamine amidotransferase-negative mutant (PubMed:2123867).</text>
</comment>
<comment type="catalytic activity">
    <reaction>
        <text>chorismate + L-glutamine = anthranilate + pyruvate + L-glutamate + H(+)</text>
        <dbReference type="Rhea" id="RHEA:21732"/>
        <dbReference type="ChEBI" id="CHEBI:15361"/>
        <dbReference type="ChEBI" id="CHEBI:15378"/>
        <dbReference type="ChEBI" id="CHEBI:16567"/>
        <dbReference type="ChEBI" id="CHEBI:29748"/>
        <dbReference type="ChEBI" id="CHEBI:29985"/>
        <dbReference type="ChEBI" id="CHEBI:58359"/>
        <dbReference type="EC" id="4.1.3.27"/>
    </reaction>
</comment>
<comment type="catalytic activity">
    <reaction evidence="6">
        <text>chorismate + L-glutamine = 4-amino-4-deoxychorismate + L-glutamate</text>
        <dbReference type="Rhea" id="RHEA:11672"/>
        <dbReference type="ChEBI" id="CHEBI:29748"/>
        <dbReference type="ChEBI" id="CHEBI:29985"/>
        <dbReference type="ChEBI" id="CHEBI:58359"/>
        <dbReference type="ChEBI" id="CHEBI:58406"/>
        <dbReference type="EC" id="2.6.1.85"/>
    </reaction>
</comment>
<comment type="pathway">
    <text>Amino-acid biosynthesis; L-tryptophan biosynthesis; L-tryptophan from chorismate: step 1/5.</text>
</comment>
<comment type="pathway">
    <text>Cofactor biosynthesis; tetrahydrofolate biosynthesis; 4-aminobenzoate from chorismate: step 1/2.</text>
</comment>
<comment type="subunit">
    <text evidence="1">Monomer. Heterodimer consisting of two non-identical subunits: a glutamine amidotransferase subunit (PabA) and a aminodeoxychorismate synthase subunit (PabB) (By similarity).</text>
</comment>
<comment type="induction">
    <text evidence="6">Repressed by tryptophan.</text>
</comment>
<comment type="disruption phenotype">
    <text evidence="3">Requires tryptophan and has a partial requirement for p-aminobenzoic acid for growth.</text>
</comment>
<evidence type="ECO:0000250" key="1">
    <source>
        <dbReference type="UniProtKB" id="P00903"/>
    </source>
</evidence>
<evidence type="ECO:0000255" key="2">
    <source>
        <dbReference type="PROSITE-ProRule" id="PRU00605"/>
    </source>
</evidence>
<evidence type="ECO:0000269" key="3">
    <source>
    </source>
</evidence>
<evidence type="ECO:0000303" key="4">
    <source>
    </source>
</evidence>
<evidence type="ECO:0000303" key="5">
    <source>
    </source>
</evidence>
<evidence type="ECO:0000305" key="6">
    <source>
    </source>
</evidence>
<name>PABA_BACSU</name>
<proteinExistence type="evidence at transcript level"/>
<feature type="chain" id="PRO_0000056848" description="Aminodeoxychorismate/anthranilate synthase component 2">
    <location>
        <begin position="1"/>
        <end position="194"/>
    </location>
</feature>
<feature type="domain" description="Glutamine amidotransferase type-1" evidence="2">
    <location>
        <begin position="1"/>
        <end position="194"/>
    </location>
</feature>
<feature type="active site" evidence="2">
    <location>
        <position position="79"/>
    </location>
</feature>
<feature type="active site" evidence="2">
    <location>
        <position position="168"/>
    </location>
</feature>
<feature type="active site" evidence="2">
    <location>
        <position position="170"/>
    </location>
</feature>
<sequence>MILMIDNYDSFTYNLVQYLGELGEELVVKRNDSITIDEIEELSPDFLMISPGPCSPDEAGISLEAIKHFAGKIPIFGVCLGHQSIAQVFGGDVVRAERLMHGKTSDIEHDGKTIFEGLKNPLVATRYHSLIVKPETLPSCFTVTAQTKEGEIMAIRHNDLPIEGVQFHPESIMTSFGKEMLRNFIETYRKEVIA</sequence>
<organism>
    <name type="scientific">Bacillus subtilis (strain 168)</name>
    <dbReference type="NCBI Taxonomy" id="224308"/>
    <lineage>
        <taxon>Bacteria</taxon>
        <taxon>Bacillati</taxon>
        <taxon>Bacillota</taxon>
        <taxon>Bacilli</taxon>
        <taxon>Bacillales</taxon>
        <taxon>Bacillaceae</taxon>
        <taxon>Bacillus</taxon>
    </lineage>
</organism>
<reference key="1">
    <citation type="journal article" date="1990" name="J. Bacteriol.">
        <title>An apparent Bacillus subtilis folic acid biosynthetic operon containing pab, an amphibolic trpG gene, a third gene required for synthesis of para-aminobenzoic acid, and the dihydropteroate synthase gene.</title>
        <authorList>
            <person name="Slock J."/>
            <person name="Stahly D.P."/>
            <person name="Han C.-Y."/>
            <person name="Six E.W."/>
            <person name="Crawford I.P."/>
        </authorList>
    </citation>
    <scope>NUCLEOTIDE SEQUENCE [GENOMIC DNA]</scope>
    <scope>FUNCTION</scope>
    <scope>INDUCTION</scope>
    <scope>DISRUPTION PHENOTYPE</scope>
    <source>
        <strain>ASB342</strain>
    </source>
</reference>
<reference key="2">
    <citation type="journal article" date="1994" name="DNA Res.">
        <title>Systematic sequencing of the 180 kilobase region of the Bacillus subtilis chromosome containing the replication origin.</title>
        <authorList>
            <person name="Ogasawara N."/>
            <person name="Nakai S."/>
            <person name="Yoshikawa H."/>
        </authorList>
    </citation>
    <scope>NUCLEOTIDE SEQUENCE [GENOMIC DNA]</scope>
    <source>
        <strain>168</strain>
    </source>
</reference>
<reference key="3">
    <citation type="journal article" date="1997" name="Nature">
        <title>The complete genome sequence of the Gram-positive bacterium Bacillus subtilis.</title>
        <authorList>
            <person name="Kunst F."/>
            <person name="Ogasawara N."/>
            <person name="Moszer I."/>
            <person name="Albertini A.M."/>
            <person name="Alloni G."/>
            <person name="Azevedo V."/>
            <person name="Bertero M.G."/>
            <person name="Bessieres P."/>
            <person name="Bolotin A."/>
            <person name="Borchert S."/>
            <person name="Borriss R."/>
            <person name="Boursier L."/>
            <person name="Brans A."/>
            <person name="Braun M."/>
            <person name="Brignell S.C."/>
            <person name="Bron S."/>
            <person name="Brouillet S."/>
            <person name="Bruschi C.V."/>
            <person name="Caldwell B."/>
            <person name="Capuano V."/>
            <person name="Carter N.M."/>
            <person name="Choi S.-K."/>
            <person name="Codani J.-J."/>
            <person name="Connerton I.F."/>
            <person name="Cummings N.J."/>
            <person name="Daniel R.A."/>
            <person name="Denizot F."/>
            <person name="Devine K.M."/>
            <person name="Duesterhoeft A."/>
            <person name="Ehrlich S.D."/>
            <person name="Emmerson P.T."/>
            <person name="Entian K.-D."/>
            <person name="Errington J."/>
            <person name="Fabret C."/>
            <person name="Ferrari E."/>
            <person name="Foulger D."/>
            <person name="Fritz C."/>
            <person name="Fujita M."/>
            <person name="Fujita Y."/>
            <person name="Fuma S."/>
            <person name="Galizzi A."/>
            <person name="Galleron N."/>
            <person name="Ghim S.-Y."/>
            <person name="Glaser P."/>
            <person name="Goffeau A."/>
            <person name="Golightly E.J."/>
            <person name="Grandi G."/>
            <person name="Guiseppi G."/>
            <person name="Guy B.J."/>
            <person name="Haga K."/>
            <person name="Haiech J."/>
            <person name="Harwood C.R."/>
            <person name="Henaut A."/>
            <person name="Hilbert H."/>
            <person name="Holsappel S."/>
            <person name="Hosono S."/>
            <person name="Hullo M.-F."/>
            <person name="Itaya M."/>
            <person name="Jones L.-M."/>
            <person name="Joris B."/>
            <person name="Karamata D."/>
            <person name="Kasahara Y."/>
            <person name="Klaerr-Blanchard M."/>
            <person name="Klein C."/>
            <person name="Kobayashi Y."/>
            <person name="Koetter P."/>
            <person name="Koningstein G."/>
            <person name="Krogh S."/>
            <person name="Kumano M."/>
            <person name="Kurita K."/>
            <person name="Lapidus A."/>
            <person name="Lardinois S."/>
            <person name="Lauber J."/>
            <person name="Lazarevic V."/>
            <person name="Lee S.-M."/>
            <person name="Levine A."/>
            <person name="Liu H."/>
            <person name="Masuda S."/>
            <person name="Mauel C."/>
            <person name="Medigue C."/>
            <person name="Medina N."/>
            <person name="Mellado R.P."/>
            <person name="Mizuno M."/>
            <person name="Moestl D."/>
            <person name="Nakai S."/>
            <person name="Noback M."/>
            <person name="Noone D."/>
            <person name="O'Reilly M."/>
            <person name="Ogawa K."/>
            <person name="Ogiwara A."/>
            <person name="Oudega B."/>
            <person name="Park S.-H."/>
            <person name="Parro V."/>
            <person name="Pohl T.M."/>
            <person name="Portetelle D."/>
            <person name="Porwollik S."/>
            <person name="Prescott A.M."/>
            <person name="Presecan E."/>
            <person name="Pujic P."/>
            <person name="Purnelle B."/>
            <person name="Rapoport G."/>
            <person name="Rey M."/>
            <person name="Reynolds S."/>
            <person name="Rieger M."/>
            <person name="Rivolta C."/>
            <person name="Rocha E."/>
            <person name="Roche B."/>
            <person name="Rose M."/>
            <person name="Sadaie Y."/>
            <person name="Sato T."/>
            <person name="Scanlan E."/>
            <person name="Schleich S."/>
            <person name="Schroeter R."/>
            <person name="Scoffone F."/>
            <person name="Sekiguchi J."/>
            <person name="Sekowska A."/>
            <person name="Seror S.J."/>
            <person name="Serror P."/>
            <person name="Shin B.-S."/>
            <person name="Soldo B."/>
            <person name="Sorokin A."/>
            <person name="Tacconi E."/>
            <person name="Takagi T."/>
            <person name="Takahashi H."/>
            <person name="Takemaru K."/>
            <person name="Takeuchi M."/>
            <person name="Tamakoshi A."/>
            <person name="Tanaka T."/>
            <person name="Terpstra P."/>
            <person name="Tognoni A."/>
            <person name="Tosato V."/>
            <person name="Uchiyama S."/>
            <person name="Vandenbol M."/>
            <person name="Vannier F."/>
            <person name="Vassarotti A."/>
            <person name="Viari A."/>
            <person name="Wambutt R."/>
            <person name="Wedler E."/>
            <person name="Wedler H."/>
            <person name="Weitzenegger T."/>
            <person name="Winters P."/>
            <person name="Wipat A."/>
            <person name="Yamamoto H."/>
            <person name="Yamane K."/>
            <person name="Yasumoto K."/>
            <person name="Yata K."/>
            <person name="Yoshida K."/>
            <person name="Yoshikawa H.-F."/>
            <person name="Zumstein E."/>
            <person name="Yoshikawa H."/>
            <person name="Danchin A."/>
        </authorList>
    </citation>
    <scope>NUCLEOTIDE SEQUENCE [LARGE SCALE GENOMIC DNA]</scope>
    <source>
        <strain>168</strain>
    </source>
</reference>
<accession>P28819</accession>